<keyword id="KW-0325">Glycoprotein</keyword>
<keyword id="KW-1031">Host cell junction</keyword>
<keyword id="KW-1032">Host cell membrane</keyword>
<keyword id="KW-1040">Host Golgi apparatus</keyword>
<keyword id="KW-1043">Host membrane</keyword>
<keyword id="KW-0945">Host-virus interaction</keyword>
<keyword id="KW-0472">Membrane</keyword>
<keyword id="KW-1185">Reference proteome</keyword>
<keyword id="KW-0732">Signal</keyword>
<keyword id="KW-0812">Transmembrane</keyword>
<keyword id="KW-1133">Transmembrane helix</keyword>
<keyword id="KW-0261">Viral envelope protein</keyword>
<keyword id="KW-0899">Viral immunoevasion</keyword>
<keyword id="KW-0946">Virion</keyword>
<evidence type="ECO:0000250" key="1"/>
<evidence type="ECO:0000255" key="2"/>
<evidence type="ECO:0000256" key="3">
    <source>
        <dbReference type="SAM" id="MobiDB-lite"/>
    </source>
</evidence>
<evidence type="ECO:0000269" key="4">
    <source>
    </source>
</evidence>
<evidence type="ECO:0000269" key="5">
    <source>
    </source>
</evidence>
<evidence type="ECO:0000269" key="6">
    <source>
    </source>
</evidence>
<evidence type="ECO:0000269" key="7">
    <source>
    </source>
</evidence>
<evidence type="ECO:0000269" key="8">
    <source>
    </source>
</evidence>
<evidence type="ECO:0000305" key="9"/>
<accession>P06487</accession>
<accession>B9VQK1</accession>
<accession>Q09I70</accession>
<gene>
    <name type="primary">gI</name>
    <name type="ORF">US7</name>
</gene>
<organismHost>
    <name type="scientific">Homo sapiens</name>
    <name type="common">Human</name>
    <dbReference type="NCBI Taxonomy" id="9606"/>
</organismHost>
<proteinExistence type="evidence at protein level"/>
<dbReference type="EMBL" id="X14112">
    <property type="protein sequence ID" value="CAA32284.1"/>
    <property type="molecule type" value="Genomic_DNA"/>
</dbReference>
<dbReference type="EMBL" id="X02138">
    <property type="protein sequence ID" value="CAA26061.1"/>
    <property type="molecule type" value="Genomic_DNA"/>
</dbReference>
<dbReference type="EMBL" id="L00036">
    <property type="protein sequence ID" value="AAA96681.1"/>
    <property type="molecule type" value="Genomic_DNA"/>
</dbReference>
<dbReference type="EMBL" id="DQ889502">
    <property type="protein sequence ID" value="ABI63525.1"/>
    <property type="molecule type" value="Genomic_DNA"/>
</dbReference>
<dbReference type="EMBL" id="FJ593289">
    <property type="protein sequence ID" value="ACM62296.1"/>
    <property type="molecule type" value="Genomic_DNA"/>
</dbReference>
<dbReference type="PIR" id="A05243">
    <property type="entry name" value="QQBE77"/>
</dbReference>
<dbReference type="RefSeq" id="YP_009137142.1">
    <property type="nucleotide sequence ID" value="NC_001806.2"/>
</dbReference>
<dbReference type="ChEMBL" id="CHEMBL2364696"/>
<dbReference type="DrugCentral" id="P06487"/>
<dbReference type="GlyCosmos" id="P06487">
    <property type="glycosylation" value="3 sites, No reported glycans"/>
</dbReference>
<dbReference type="DNASU" id="2703446"/>
<dbReference type="GeneID" id="2703446"/>
<dbReference type="KEGG" id="vg:2703446"/>
<dbReference type="PRO" id="PR:P06487"/>
<dbReference type="Proteomes" id="UP000009294">
    <property type="component" value="Segment"/>
</dbReference>
<dbReference type="Proteomes" id="UP000180652">
    <property type="component" value="Segment"/>
</dbReference>
<dbReference type="GO" id="GO:0043657">
    <property type="term" value="C:host cell"/>
    <property type="evidence" value="ECO:0007669"/>
    <property type="project" value="InterPro"/>
</dbReference>
<dbReference type="GO" id="GO:0044177">
    <property type="term" value="C:host cell Golgi apparatus"/>
    <property type="evidence" value="ECO:0007669"/>
    <property type="project" value="UniProtKB-SubCell"/>
</dbReference>
<dbReference type="GO" id="GO:0044156">
    <property type="term" value="C:host cell junction"/>
    <property type="evidence" value="ECO:0007669"/>
    <property type="project" value="UniProtKB-SubCell"/>
</dbReference>
<dbReference type="GO" id="GO:0016020">
    <property type="term" value="C:membrane"/>
    <property type="evidence" value="ECO:0007669"/>
    <property type="project" value="UniProtKB-KW"/>
</dbReference>
<dbReference type="GO" id="GO:0019031">
    <property type="term" value="C:viral envelope"/>
    <property type="evidence" value="ECO:0007669"/>
    <property type="project" value="UniProtKB-KW"/>
</dbReference>
<dbReference type="GO" id="GO:0055036">
    <property type="term" value="C:virion membrane"/>
    <property type="evidence" value="ECO:0007669"/>
    <property type="project" value="UniProtKB-SubCell"/>
</dbReference>
<dbReference type="InterPro" id="IPR002874">
    <property type="entry name" value="Herpes_gI"/>
</dbReference>
<dbReference type="Pfam" id="PF01688">
    <property type="entry name" value="Herpes_gI"/>
    <property type="match status" value="1"/>
</dbReference>
<comment type="function">
    <text evidence="4 5 8">In epithelial cells, the heterodimer gE/gI is required for the cell-to-cell spread of the virus, by sorting nascent virions to cell junctions. Once the virus reaches the cell junctions, virus particles can spread to adjacent cells extremely rapidly through interactions with cellular receptors that accumulate at these junctions. Implicated in basolateral spread in polarized cells. In neuronal cells, gE/gI is essential for the anterograde spread of the infection throughout the host nervous system. Together with US9, the heterodimer gE/gI is involved in the sorting and transport of viral structural components toward axon tips.</text>
</comment>
<comment type="function">
    <text>The heterodimer gE/gI serves as a receptor for the Fc part of human IgG. Dissociation of gE/gI from IgG occurs at acidic pH. May thus be involved in anti-HSV antibodies bipolar bridging, followed by intracellular endocytosis and degradation, thereby interfering with host Ig-mediated immune responses.</text>
</comment>
<comment type="subunit">
    <text evidence="1">Interacts with gE; this interaction enhances the Fc receptor function of gE.</text>
</comment>
<comment type="subcellular location">
    <subcellularLocation>
        <location evidence="7">Virion membrane</location>
        <topology evidence="2">Single-pass membrane protein</topology>
    </subcellularLocation>
    <subcellularLocation>
        <location evidence="6">Host cell membrane</location>
        <topology evidence="2">Single-pass type I membrane protein</topology>
    </subcellularLocation>
    <subcellularLocation>
        <location evidence="4 6">Host cell junction</location>
    </subcellularLocation>
    <subcellularLocation>
        <location evidence="6">Host Golgi apparatus</location>
        <location evidence="6">Host trans-Golgi network</location>
    </subcellularLocation>
    <text evidence="4">During virion morphogenesis, this protein probably accumulates in the trans-Golgi where secondary envelopment occurs. The heterodimer gE/gI then redistributes to cell junctions to promote cell-cell spread later in the infection.</text>
</comment>
<comment type="similarity">
    <text evidence="9">Belongs to the alphaherpesvirinae glycoprotein I family.</text>
</comment>
<organism>
    <name type="scientific">Human herpesvirus 1 (strain 17)</name>
    <name type="common">HHV-1</name>
    <name type="synonym">Human herpes simplex virus 1</name>
    <dbReference type="NCBI Taxonomy" id="10299"/>
    <lineage>
        <taxon>Viruses</taxon>
        <taxon>Duplodnaviria</taxon>
        <taxon>Heunggongvirae</taxon>
        <taxon>Peploviricota</taxon>
        <taxon>Herviviricetes</taxon>
        <taxon>Herpesvirales</taxon>
        <taxon>Orthoherpesviridae</taxon>
        <taxon>Alphaherpesvirinae</taxon>
        <taxon>Simplexvirus</taxon>
        <taxon>Simplexvirus humanalpha1</taxon>
        <taxon>Human herpesvirus 1</taxon>
    </lineage>
</organism>
<protein>
    <recommendedName>
        <fullName>Envelope glycoprotein I</fullName>
        <shortName>gI</shortName>
    </recommendedName>
</protein>
<reference key="1">
    <citation type="journal article" date="1985" name="J. Mol. Biol.">
        <title>Sequence determination and genetic content of the short unique region in the genome of herpes simplex virus type 1.</title>
        <authorList>
            <person name="McGeoch D.J."/>
            <person name="Dolan A."/>
            <person name="Donald S."/>
            <person name="Rixon F.J."/>
        </authorList>
    </citation>
    <scope>NUCLEOTIDE SEQUENCE [GENOMIC DNA]</scope>
</reference>
<reference key="2">
    <citation type="journal article" date="2007" name="Microbes Infect.">
        <title>Determination and analysis of the DNA sequence of highly attenuated herpes simplex virus type 1 mutant HF10, a potential oncolytic virus.</title>
        <authorList>
            <person name="Ushijima Y."/>
            <person name="Luo C."/>
            <person name="Goshima F."/>
            <person name="Yamauchi Y."/>
            <person name="Kimura H."/>
            <person name="Nishiyama Y."/>
        </authorList>
    </citation>
    <scope>NUCLEOTIDE SEQUENCE [LARGE SCALE GENOMIC DNA]</scope>
    <source>
        <strain>Nonneuroinvasive mutant HF10</strain>
    </source>
</reference>
<reference key="3">
    <citation type="submission" date="2008-12" db="EMBL/GenBank/DDBJ databases">
        <title>Herpes simplex virus type 1 bacterial artificial chromosome.</title>
        <authorList>
            <person name="Cunningham C."/>
            <person name="Davison A.J."/>
        </authorList>
    </citation>
    <scope>NUCLEOTIDE SEQUENCE [LARGE SCALE GENOMIC DNA]</scope>
    <source>
        <strain>17 syn+</strain>
    </source>
</reference>
<reference key="4">
    <citation type="journal article" date="1988" name="J. Virol.">
        <title>Herpes simplex virus immunoglobulin G Fc receptor activity depends on a complex of two viral glycoproteins, gE and gI.</title>
        <authorList>
            <person name="Johnson D.C."/>
            <person name="Frame M.C."/>
            <person name="Ligas M.W."/>
            <person name="Cross A.M."/>
            <person name="Stow N.D."/>
        </authorList>
    </citation>
    <scope>FUNCTION</scope>
    <scope>INTERACTION WITH GLYCOPROTEIN E</scope>
    <source>
        <strain>17 syn+</strain>
        <strain>F</strain>
    </source>
</reference>
<reference key="5">
    <citation type="journal article" date="2001" name="J. Virol.">
        <title>Herpes simplex virus gE/gI sorts nascent virions to epithelial cell junctions, promoting virus spread.</title>
        <authorList>
            <person name="Johnson D.C."/>
            <person name="Webb M."/>
            <person name="Wisner T.W."/>
            <person name="Brunetti C."/>
        </authorList>
    </citation>
    <scope>FUNCTION</scope>
    <scope>SUBCELLULAR LOCATION</scope>
</reference>
<reference key="6">
    <citation type="journal article" date="2004" name="J. Biol. Chem.">
        <title>pH dependence and stoichiometry of binding to the Fc region of IgG by the herpes simplex virus Fc receptor gE-gI.</title>
        <authorList>
            <person name="Sprague E.R."/>
            <person name="Martin W.L."/>
            <person name="Bjorkman P.J."/>
        </authorList>
    </citation>
    <scope>FUNCTION</scope>
    <source>
        <strain>KOS</strain>
    </source>
</reference>
<reference key="7">
    <citation type="journal article" date="2006" name="J. Virol.">
        <title>Herpes simplex virus gE/gI must accumulate in the trans-Golgi network at early times and then redistribute to cell junctions to promote cell-cell spread.</title>
        <authorList>
            <person name="Farnsworth A."/>
            <person name="Johnson D.C."/>
        </authorList>
    </citation>
    <scope>SUBCELLULAR LOCATION</scope>
    <source>
        <strain>F</strain>
    </source>
</reference>
<reference key="8">
    <citation type="journal article" date="2008" name="J. Virol.">
        <title>Comprehensive characterization of extracellular herpes simplex virus type 1 virions.</title>
        <authorList>
            <person name="Loret S."/>
            <person name="Guay G."/>
            <person name="Lippe R."/>
        </authorList>
    </citation>
    <scope>SUBCELLULAR LOCATION</scope>
    <source>
        <strain>F</strain>
    </source>
</reference>
<feature type="signal peptide" evidence="2">
    <location>
        <begin position="1"/>
        <end position="20"/>
    </location>
</feature>
<feature type="chain" id="PRO_0000115770" description="Envelope glycoprotein I">
    <location>
        <begin position="21"/>
        <end position="390"/>
    </location>
</feature>
<feature type="topological domain" description="Virion surface" evidence="2">
    <location>
        <begin position="21"/>
        <end position="276"/>
    </location>
</feature>
<feature type="transmembrane region" description="Helical" evidence="2">
    <location>
        <begin position="277"/>
        <end position="297"/>
    </location>
</feature>
<feature type="topological domain" description="Intravirion" evidence="2">
    <location>
        <begin position="298"/>
        <end position="390"/>
    </location>
</feature>
<feature type="region of interest" description="Disordered" evidence="3">
    <location>
        <begin position="200"/>
        <end position="261"/>
    </location>
</feature>
<feature type="region of interest" description="Disordered" evidence="3">
    <location>
        <begin position="334"/>
        <end position="390"/>
    </location>
</feature>
<feature type="compositionally biased region" description="Low complexity" evidence="3">
    <location>
        <begin position="202"/>
        <end position="237"/>
    </location>
</feature>
<feature type="compositionally biased region" description="Pro residues" evidence="3">
    <location>
        <begin position="373"/>
        <end position="390"/>
    </location>
</feature>
<feature type="glycosylation site" description="N-linked (GlcNAc...) asparagine; by host" evidence="2">
    <location>
        <position position="156"/>
    </location>
</feature>
<feature type="glycosylation site" description="N-linked (GlcNAc...) asparagine; by host" evidence="2">
    <location>
        <position position="175"/>
    </location>
</feature>
<feature type="glycosylation site" description="N-linked (GlcNAc...) asparagine; by host" evidence="2">
    <location>
        <position position="257"/>
    </location>
</feature>
<feature type="sequence variant" description="In strain: Nonneuroinvasive mutant HF10.">
    <original>G</original>
    <variation>V</variation>
    <location>
        <position position="73"/>
    </location>
</feature>
<feature type="sequence variant" description="In strain: Nonneuroinvasive mutant HF10.">
    <original>A</original>
    <variation>T</variation>
    <location>
        <position position="165"/>
    </location>
</feature>
<feature type="sequence variant" description="In strain: Nonneuroinvasive mutant HF10.">
    <location>
        <begin position="225"/>
        <end position="231"/>
    </location>
</feature>
<name>GI_HHV11</name>
<sequence>MPCRPLQGLVLVGLWVCATSLVVRGPTVSLVSNSFVDAGALGPDGVVEEDLLILGELRFVGDQVPHTTYYDGGVELWHYPMGHKCPRVVHVVTVTACPRRPAVAFALCRATDSTHSPAYPTLELNLAQQPLLRVQRATRDYAGVYVLRVWVGDAPNASLFVLGMAIAAEGTLAYNGSAYGSCDPKLLPSSAPRLAPASVYQPAPNQASTPSTTTSTPSTTIPAPSTTIPAPQASTTPFPTGDPKPQPPGVNHEPPSNATRATRDSRYALTVTQIIQIAIPASIIALVFLGSCICFIHRCQRRYRRSRRPIYSPQMPTGISCAVNEAAMARLGAELKSHPSTPPKSRRRSSRTPMPSLTAIAEESEPAGAAGLPTPPVDPTTPTPTPPLLV</sequence>